<protein>
    <recommendedName>
        <fullName>ADP-ribosylation factor 1</fullName>
        <ecNumber evidence="1">3.6.5.2</ecNumber>
    </recommendedName>
</protein>
<feature type="initiator methionine" description="Removed" evidence="1">
    <location>
        <position position="1"/>
    </location>
</feature>
<feature type="chain" id="PRO_0000207381" description="ADP-ribosylation factor 1">
    <location>
        <begin position="2"/>
        <end position="181"/>
    </location>
</feature>
<feature type="region of interest" description="Important for the stable binding to the membranes" evidence="3">
    <location>
        <begin position="3"/>
        <end position="16"/>
    </location>
</feature>
<feature type="binding site" evidence="8 11 12">
    <location>
        <begin position="24"/>
        <end position="32"/>
    </location>
    <ligand>
        <name>GTP</name>
        <dbReference type="ChEBI" id="CHEBI:37565"/>
    </ligand>
</feature>
<feature type="binding site" evidence="8 11 12">
    <location>
        <begin position="126"/>
        <end position="129"/>
    </location>
    <ligand>
        <name>GTP</name>
        <dbReference type="ChEBI" id="CHEBI:37565"/>
    </ligand>
</feature>
<feature type="binding site" evidence="8 12">
    <location>
        <position position="160"/>
    </location>
    <ligand>
        <name>GTP</name>
        <dbReference type="ChEBI" id="CHEBI:37565"/>
    </ligand>
</feature>
<feature type="modified residue" description="N-acetylglycine; alternate" evidence="1">
    <location>
        <position position="2"/>
    </location>
</feature>
<feature type="lipid moiety-binding region" description="N-myristoyl glycine; alternate" evidence="1">
    <location>
        <position position="2"/>
    </location>
</feature>
<feature type="helix" evidence="14">
    <location>
        <begin position="3"/>
        <end position="10"/>
    </location>
</feature>
<feature type="strand" evidence="14">
    <location>
        <begin position="14"/>
        <end position="16"/>
    </location>
</feature>
<feature type="strand" evidence="14">
    <location>
        <begin position="18"/>
        <end position="25"/>
    </location>
</feature>
<feature type="helix" evidence="14">
    <location>
        <begin position="30"/>
        <end position="37"/>
    </location>
</feature>
<feature type="strand" evidence="14">
    <location>
        <begin position="42"/>
        <end position="48"/>
    </location>
</feature>
<feature type="strand" evidence="14">
    <location>
        <begin position="51"/>
        <end position="57"/>
    </location>
</feature>
<feature type="strand" evidence="14">
    <location>
        <begin position="59"/>
        <end position="67"/>
    </location>
</feature>
<feature type="helix" evidence="14">
    <location>
        <begin position="77"/>
        <end position="82"/>
    </location>
</feature>
<feature type="strand" evidence="14">
    <location>
        <begin position="85"/>
        <end position="93"/>
    </location>
</feature>
<feature type="helix" evidence="14">
    <location>
        <begin position="100"/>
        <end position="111"/>
    </location>
</feature>
<feature type="helix" evidence="14">
    <location>
        <begin position="114"/>
        <end position="116"/>
    </location>
</feature>
<feature type="strand" evidence="14">
    <location>
        <begin position="120"/>
        <end position="126"/>
    </location>
</feature>
<feature type="strand" evidence="13">
    <location>
        <begin position="130"/>
        <end position="132"/>
    </location>
</feature>
<feature type="helix" evidence="14">
    <location>
        <begin position="136"/>
        <end position="142"/>
    </location>
</feature>
<feature type="helix" evidence="14">
    <location>
        <begin position="145"/>
        <end position="147"/>
    </location>
</feature>
<feature type="strand" evidence="14">
    <location>
        <begin position="155"/>
        <end position="157"/>
    </location>
</feature>
<feature type="turn" evidence="14">
    <location>
        <begin position="160"/>
        <end position="162"/>
    </location>
</feature>
<feature type="helix" evidence="14">
    <location>
        <begin position="166"/>
        <end position="178"/>
    </location>
</feature>
<sequence length="181" mass="20697">MGNIFANLFKGLFGKKEMRILMVGLDAAGKTTILYKLKLGEIVTTIPTIGFNVETVEYKNISFTVWDVGGQDKIRPLWRHYFQNTQGLIFVVDSNDRERVNEAREELMRMLAEDELRDAVLLVFANKQDLPNAMNAAEITDKLGLHSLRHRNWYIQATCATSGDGLYEGLDWLSNQLRNQK</sequence>
<evidence type="ECO:0000250" key="1">
    <source>
        <dbReference type="UniProtKB" id="P84077"/>
    </source>
</evidence>
<evidence type="ECO:0000250" key="2">
    <source>
        <dbReference type="UniProtKB" id="P84078"/>
    </source>
</evidence>
<evidence type="ECO:0000250" key="3">
    <source>
        <dbReference type="UniProtKB" id="P84080"/>
    </source>
</evidence>
<evidence type="ECO:0000269" key="4">
    <source>
    </source>
</evidence>
<evidence type="ECO:0000269" key="5">
    <source>
    </source>
</evidence>
<evidence type="ECO:0000269" key="6">
    <source>
    </source>
</evidence>
<evidence type="ECO:0000269" key="7">
    <source>
    </source>
</evidence>
<evidence type="ECO:0000269" key="8">
    <source>
    </source>
</evidence>
<evidence type="ECO:0000269" key="9">
    <source>
    </source>
</evidence>
<evidence type="ECO:0000305" key="10"/>
<evidence type="ECO:0007744" key="11">
    <source>
        <dbReference type="PDB" id="1RRF"/>
    </source>
</evidence>
<evidence type="ECO:0007744" key="12">
    <source>
        <dbReference type="PDB" id="1RRG"/>
    </source>
</evidence>
<evidence type="ECO:0007829" key="13">
    <source>
        <dbReference type="PDB" id="1RRF"/>
    </source>
</evidence>
<evidence type="ECO:0007829" key="14">
    <source>
        <dbReference type="PDB" id="1RRG"/>
    </source>
</evidence>
<proteinExistence type="evidence at protein level"/>
<comment type="function">
    <text evidence="1 7">Small GTPase involved in protein trafficking between different compartments (By similarity). Modulates vesicle budding and uncoating within the Golgi complex (By similarity). In its GTP-bound form, triggers the recruitment of coatomer proteins to the Golgi membrane (By similarity). The hydrolysis of ARF1-bound GTP, which is mediated by ARFGAPs proteins, is required for dissociation of coat proteins from Golgi membranes and vesicles (By similarity). The GTP-bound form interacts with PICK1 to limit PICK1-mediated inhibition of Arp2/3 complex activity; the function is linked to AMPA receptor (AMPAR) trafficking, regulation of synaptic plasticity of excitatory synapses and spine shrinkage during long-term depression (LTD) (PubMed:23889934). Plays a key role in the regulation of intestinal stem cells and gut microbiota, and is essential for maintaining intestinal homeostasis (By similarity). Also plays a critical role in mast cell expansion but not in mast cell maturation by facilitating optimal mTORC1 activation (By similarity).</text>
</comment>
<comment type="catalytic activity">
    <reaction evidence="1">
        <text>GTP + H2O = GDP + phosphate + H(+)</text>
        <dbReference type="Rhea" id="RHEA:19669"/>
        <dbReference type="ChEBI" id="CHEBI:15377"/>
        <dbReference type="ChEBI" id="CHEBI:15378"/>
        <dbReference type="ChEBI" id="CHEBI:37565"/>
        <dbReference type="ChEBI" id="CHEBI:43474"/>
        <dbReference type="ChEBI" id="CHEBI:58189"/>
        <dbReference type="EC" id="3.6.5.2"/>
    </reaction>
</comment>
<comment type="activity regulation">
    <text evidence="1">Alternates between an inactive GDP-bound form and an active GTP-bound form (By similarity). Activated by guanine nucleotide-exchange factors (GEFs) and inactivated by GTPase-activating proteins (GAPs) (By similarity).</text>
</comment>
<comment type="subunit">
    <text evidence="1 2 4 5 6 7 9">Interacts (when activated) with GGA1, GGA2 and GGA3; the interaction is required for proper subcellular location of GGA1, GGA2 and GGA3 (By similarity). Interacts with ARHGAP21, ASAP2, HERC1, PRKCABP, PIP5K1B, TMED2, PSCD2, TMED10 and GRIA2 (PubMed:10022920, PubMed:10623590, PubMed:10747863, PubMed:23889934). Interacts with ARFGAP1, which hydrolyzes GTP and thus, regulates its function (PubMed:7890632). Interacts with PI4KB in the Golgi complex. Interacts with NCS1/FREQ in the Golgi and at the plasma membrane. Interacts with PLEKHA3. Interacts with PLEKHA8; the interaction, together with phosphatidylinositol 4-phosphate binding, is required for FAPP2-mediated glucosylceramide transfer activity (By similarity). Interacts (activated) with PICK1 (via PDZ domain); the interaction blocks Arp2/3 complex inhibition (PubMed:23889934). Interacts with IQSEC1 (By similarity). Interacts with C9orf72 (By similarity).</text>
</comment>
<comment type="subcellular location">
    <subcellularLocation>
        <location evidence="7">Golgi apparatus membrane</location>
        <topology evidence="3">Lipid-anchor</topology>
        <orientation evidence="10">Cytoplasmic side</orientation>
    </subcellularLocation>
    <subcellularLocation>
        <location evidence="7">Synapse</location>
        <location evidence="7">Synaptosome</location>
    </subcellularLocation>
    <subcellularLocation>
        <location evidence="7">Postsynaptic density</location>
    </subcellularLocation>
    <text evidence="3">In the GDP-bound form, associates transiently with the membranes via its myristoylated N-terminus where guanine nucleotide-exchange factor (GEF)-mediated nucleotide exchange occurs (By similarity). Following nucleotide exchange, the GTP-bound form undergoes a conformational change, leading to the exposure of a myristoylated N-terminal amphipathic helix that provides stable membrane anchorage (By similarity).</text>
</comment>
<comment type="similarity">
    <text evidence="10">Belongs to the small GTPase superfamily. Arf family.</text>
</comment>
<organism>
    <name type="scientific">Rattus norvegicus</name>
    <name type="common">Rat</name>
    <dbReference type="NCBI Taxonomy" id="10116"/>
    <lineage>
        <taxon>Eukaryota</taxon>
        <taxon>Metazoa</taxon>
        <taxon>Chordata</taxon>
        <taxon>Craniata</taxon>
        <taxon>Vertebrata</taxon>
        <taxon>Euteleostomi</taxon>
        <taxon>Mammalia</taxon>
        <taxon>Eutheria</taxon>
        <taxon>Euarchontoglires</taxon>
        <taxon>Glires</taxon>
        <taxon>Rodentia</taxon>
        <taxon>Myomorpha</taxon>
        <taxon>Muroidea</taxon>
        <taxon>Muridae</taxon>
        <taxon>Murinae</taxon>
        <taxon>Rattus</taxon>
    </lineage>
</organism>
<accession>P84079</accession>
<accession>P10947</accession>
<accession>P32889</accession>
<reference key="1">
    <citation type="journal article" date="1996" name="Mol. Cell. Biochem.">
        <title>Interspecies relationships among ADP-ribosylation factors (ARFs): evidence of evolutionary pressure to maintain individual identities.</title>
        <authorList>
            <person name="Price S.R."/>
            <person name="Nightingale M.S."/>
            <person name="Tsuchiya M."/>
            <person name="Moss J."/>
            <person name="Vaughan M."/>
        </authorList>
    </citation>
    <scope>NUCLEOTIDE SEQUENCE [MRNA]</scope>
    <source>
        <tissue>Brain</tissue>
    </source>
</reference>
<reference key="2">
    <citation type="journal article" date="2004" name="Genome Res.">
        <title>The status, quality, and expansion of the NIH full-length cDNA project: the Mammalian Gene Collection (MGC).</title>
        <authorList>
            <consortium name="The MGC Project Team"/>
        </authorList>
    </citation>
    <scope>NUCLEOTIDE SEQUENCE [LARGE SCALE MRNA]</scope>
    <source>
        <tissue>Pituitary</tissue>
    </source>
</reference>
<reference key="3">
    <citation type="journal article" date="1995" name="J. Biol. Chem.">
        <title>ADP-ribosylation factor-directed GTPase-activating protein. Purification and partial characterization.</title>
        <authorList>
            <person name="Makler V."/>
            <person name="Cukierman E."/>
            <person name="Rotman M."/>
            <person name="Admon A."/>
            <person name="Cassel D."/>
        </authorList>
    </citation>
    <scope>INTERACTION WITH ARFGAP1</scope>
</reference>
<reference key="4">
    <citation type="journal article" date="2000" name="Biochem. Biophys. Res. Commun.">
        <title>Interaction of the PDZ domain of human PICK1 with class I ADP-ribosylation factors.</title>
        <authorList>
            <person name="Takeya R."/>
            <person name="Takeshige K."/>
            <person name="Sumimoto H."/>
        </authorList>
    </citation>
    <scope>INTERACTION WITH PRKCABP</scope>
</reference>
<reference key="5">
    <citation type="journal article" date="1999" name="Mol. Cell. Biol.">
        <title>Identification of a new Pyk2 target protein with Arf-GAP activity.</title>
        <authorList>
            <person name="Andreev J."/>
            <person name="Simon J.-P."/>
            <person name="Sabatini D.D."/>
            <person name="Kam J."/>
            <person name="Plowman G."/>
            <person name="Randazzo P.A."/>
            <person name="Schlessinger J."/>
        </authorList>
    </citation>
    <scope>INTERACTION WITH ASAP2</scope>
</reference>
<reference key="6">
    <citation type="journal article" date="2000" name="J. Biol. Chem.">
        <title>Type I phosphatidylinositol 4-phosphate 5-kinase directly interacts with ADP-ribosylation factor 1 and is responsible for phosphatidylinositol 4,5-bisphosphate synthesis in the Golgi compartment.</title>
        <authorList>
            <person name="Jones D.H."/>
            <person name="Morris J.B."/>
            <person name="Morgan C.P."/>
            <person name="Kondo H."/>
            <person name="Irvine R.F."/>
            <person name="Cockcroft S."/>
        </authorList>
    </citation>
    <scope>INTERACTION WITH PIP5K1B</scope>
</reference>
<reference key="7">
    <citation type="journal article" date="2013" name="Neuron">
        <title>The small GTPase Arf1 modulates Arp2/3-mediated actin polymerization via PICK1 to regulate synaptic plasticity.</title>
        <authorList>
            <person name="Rocca D.L."/>
            <person name="Amici M."/>
            <person name="Antoniou A."/>
            <person name="Suarez E.B."/>
            <person name="Halemani N."/>
            <person name="Murk K."/>
            <person name="McGarvey J."/>
            <person name="Jaafari N."/>
            <person name="Mellor J.R."/>
            <person name="Collingridge G.L."/>
            <person name="Hanley J.G."/>
        </authorList>
    </citation>
    <scope>FUNCTION</scope>
    <scope>INTERACTION WITH PICK1 AND GRIA2</scope>
    <scope>SUBCELLULAR LOCATION</scope>
</reference>
<reference evidence="11 12" key="8">
    <citation type="journal article" date="1995" name="Nat. Struct. Biol.">
        <title>The structure of rat ADP-ribosylation factor-1 (ARF-1) complexed to GDP determined from two different crystal forms.</title>
        <authorList>
            <person name="Greasley S.E."/>
            <person name="Jhoti H."/>
            <person name="Teahan C."/>
            <person name="Solari R."/>
            <person name="Fensome A."/>
            <person name="Thomas G.M."/>
            <person name="Cockcroft S."/>
            <person name="Bax B."/>
        </authorList>
    </citation>
    <scope>X-RAY CRYSTALLOGRAPHY (3.0 ANGSTROMS) IN COMPLEX WITH GDP</scope>
</reference>
<gene>
    <name type="primary">Arf1</name>
</gene>
<keyword id="KW-0002">3D-structure</keyword>
<keyword id="KW-0007">Acetylation</keyword>
<keyword id="KW-0931">ER-Golgi transport</keyword>
<keyword id="KW-0333">Golgi apparatus</keyword>
<keyword id="KW-0342">GTP-binding</keyword>
<keyword id="KW-0378">Hydrolase</keyword>
<keyword id="KW-0449">Lipoprotein</keyword>
<keyword id="KW-0472">Membrane</keyword>
<keyword id="KW-0519">Myristate</keyword>
<keyword id="KW-0547">Nucleotide-binding</keyword>
<keyword id="KW-0653">Protein transport</keyword>
<keyword id="KW-1185">Reference proteome</keyword>
<keyword id="KW-0770">Synapse</keyword>
<keyword id="KW-0771">Synaptosome</keyword>
<keyword id="KW-0813">Transport</keyword>
<name>ARF1_RAT</name>
<dbReference type="EC" id="3.6.5.2" evidence="1"/>
<dbReference type="EMBL" id="L12380">
    <property type="protein sequence ID" value="AAA40685.1"/>
    <property type="molecule type" value="mRNA"/>
</dbReference>
<dbReference type="EMBL" id="BC061552">
    <property type="protein sequence ID" value="AAH61552.1"/>
    <property type="molecule type" value="mRNA"/>
</dbReference>
<dbReference type="RefSeq" id="NP_001400966.1">
    <property type="nucleotide sequence ID" value="NM_001414037.1"/>
</dbReference>
<dbReference type="RefSeq" id="NP_001400967.1">
    <property type="nucleotide sequence ID" value="NM_001414038.1"/>
</dbReference>
<dbReference type="RefSeq" id="NP_071963.1">
    <property type="nucleotide sequence ID" value="NM_022518.5"/>
</dbReference>
<dbReference type="RefSeq" id="XP_006246587.1">
    <property type="nucleotide sequence ID" value="XM_006246525.3"/>
</dbReference>
<dbReference type="PDB" id="1RRF">
    <property type="method" value="X-ray"/>
    <property type="resolution" value="3.00 A"/>
    <property type="chains" value="A=1-181"/>
</dbReference>
<dbReference type="PDB" id="1RRG">
    <property type="method" value="X-ray"/>
    <property type="resolution" value="2.40 A"/>
    <property type="chains" value="A/B=1-181"/>
</dbReference>
<dbReference type="PDBsum" id="1RRF"/>
<dbReference type="PDBsum" id="1RRG"/>
<dbReference type="BMRB" id="P84079"/>
<dbReference type="SMR" id="P84079"/>
<dbReference type="BioGRID" id="249023">
    <property type="interactions" value="1"/>
</dbReference>
<dbReference type="CORUM" id="P84079"/>
<dbReference type="FunCoup" id="P84079">
    <property type="interactions" value="4441"/>
</dbReference>
<dbReference type="IntAct" id="P84079">
    <property type="interactions" value="2"/>
</dbReference>
<dbReference type="STRING" id="10116.ENSRNOP00000072575"/>
<dbReference type="iPTMnet" id="P84079"/>
<dbReference type="PhosphoSitePlus" id="P84079"/>
<dbReference type="SwissPalm" id="P84079"/>
<dbReference type="jPOST" id="P84079"/>
<dbReference type="PaxDb" id="10116-ENSRNOP00000064960"/>
<dbReference type="Ensembl" id="ENSRNOT00000080028.2">
    <property type="protein sequence ID" value="ENSRNOP00000072575.1"/>
    <property type="gene ID" value="ENSRNOG00000060229.2"/>
</dbReference>
<dbReference type="GeneID" id="64310"/>
<dbReference type="KEGG" id="rno:64310"/>
<dbReference type="UCSC" id="RGD:621270">
    <property type="organism name" value="rat"/>
</dbReference>
<dbReference type="AGR" id="RGD:621270"/>
<dbReference type="CTD" id="375"/>
<dbReference type="RGD" id="621270">
    <property type="gene designation" value="Arf1"/>
</dbReference>
<dbReference type="eggNOG" id="KOG0070">
    <property type="taxonomic scope" value="Eukaryota"/>
</dbReference>
<dbReference type="GeneTree" id="ENSGT00950000183080"/>
<dbReference type="HOGENOM" id="CLU_040729_9_3_1"/>
<dbReference type="InParanoid" id="P84079"/>
<dbReference type="OMA" id="HYYANTN"/>
<dbReference type="OrthoDB" id="2011769at2759"/>
<dbReference type="PhylomeDB" id="P84079"/>
<dbReference type="TreeFam" id="TF300808"/>
<dbReference type="Reactome" id="R-RNO-1660499">
    <property type="pathway name" value="Synthesis of PIPs at the plasma membrane"/>
</dbReference>
<dbReference type="Reactome" id="R-RNO-1660514">
    <property type="pathway name" value="Synthesis of PIPs at the Golgi membrane"/>
</dbReference>
<dbReference type="Reactome" id="R-RNO-199992">
    <property type="pathway name" value="trans-Golgi Network Vesicle Budding"/>
</dbReference>
<dbReference type="Reactome" id="R-RNO-2132295">
    <property type="pathway name" value="MHC class II antigen presentation"/>
</dbReference>
<dbReference type="Reactome" id="R-RNO-432720">
    <property type="pathway name" value="Lysosome Vesicle Biogenesis"/>
</dbReference>
<dbReference type="Reactome" id="R-RNO-432722">
    <property type="pathway name" value="Golgi Associated Vesicle Biogenesis"/>
</dbReference>
<dbReference type="Reactome" id="R-RNO-6807878">
    <property type="pathway name" value="COPI-mediated anterograde transport"/>
</dbReference>
<dbReference type="Reactome" id="R-RNO-6811434">
    <property type="pathway name" value="COPI-dependent Golgi-to-ER retrograde traffic"/>
</dbReference>
<dbReference type="Reactome" id="R-RNO-6811438">
    <property type="pathway name" value="Intra-Golgi traffic"/>
</dbReference>
<dbReference type="Reactome" id="R-RNO-9845576">
    <property type="pathway name" value="Glycosphingolipid transport"/>
</dbReference>
<dbReference type="EvolutionaryTrace" id="P84079"/>
<dbReference type="PRO" id="PR:P84079"/>
<dbReference type="Proteomes" id="UP000002494">
    <property type="component" value="Chromosome 10"/>
</dbReference>
<dbReference type="Bgee" id="ENSRNOG00000060229">
    <property type="expression patterns" value="Expressed in jejunum and 19 other cell types or tissues"/>
</dbReference>
<dbReference type="GO" id="GO:0031252">
    <property type="term" value="C:cell leading edge"/>
    <property type="evidence" value="ECO:0000266"/>
    <property type="project" value="RGD"/>
</dbReference>
<dbReference type="GO" id="GO:0030137">
    <property type="term" value="C:COPI-coated vesicle"/>
    <property type="evidence" value="ECO:0000314"/>
    <property type="project" value="RGD"/>
</dbReference>
<dbReference type="GO" id="GO:0005737">
    <property type="term" value="C:cytoplasm"/>
    <property type="evidence" value="ECO:0000318"/>
    <property type="project" value="GO_Central"/>
</dbReference>
<dbReference type="GO" id="GO:0005829">
    <property type="term" value="C:cytosol"/>
    <property type="evidence" value="ECO:0000266"/>
    <property type="project" value="RGD"/>
</dbReference>
<dbReference type="GO" id="GO:0012505">
    <property type="term" value="C:endomembrane system"/>
    <property type="evidence" value="ECO:0000266"/>
    <property type="project" value="RGD"/>
</dbReference>
<dbReference type="GO" id="GO:0098978">
    <property type="term" value="C:glutamatergic synapse"/>
    <property type="evidence" value="ECO:0000314"/>
    <property type="project" value="SynGO"/>
</dbReference>
<dbReference type="GO" id="GO:0005794">
    <property type="term" value="C:Golgi apparatus"/>
    <property type="evidence" value="ECO:0000266"/>
    <property type="project" value="RGD"/>
</dbReference>
<dbReference type="GO" id="GO:0000139">
    <property type="term" value="C:Golgi membrane"/>
    <property type="evidence" value="ECO:0000314"/>
    <property type="project" value="RGD"/>
</dbReference>
<dbReference type="GO" id="GO:0005770">
    <property type="term" value="C:late endosome"/>
    <property type="evidence" value="ECO:0000314"/>
    <property type="project" value="RGD"/>
</dbReference>
<dbReference type="GO" id="GO:0043005">
    <property type="term" value="C:neuron projection"/>
    <property type="evidence" value="ECO:0007669"/>
    <property type="project" value="UniProtKB-KW"/>
</dbReference>
<dbReference type="GO" id="GO:0005778">
    <property type="term" value="C:peroxisomal membrane"/>
    <property type="evidence" value="ECO:0000314"/>
    <property type="project" value="RGD"/>
</dbReference>
<dbReference type="GO" id="GO:0005886">
    <property type="term" value="C:plasma membrane"/>
    <property type="evidence" value="ECO:0000318"/>
    <property type="project" value="GO_Central"/>
</dbReference>
<dbReference type="GO" id="GO:0014069">
    <property type="term" value="C:postsynaptic density"/>
    <property type="evidence" value="ECO:0000314"/>
    <property type="project" value="SynGO"/>
</dbReference>
<dbReference type="GO" id="GO:0032991">
    <property type="term" value="C:protein-containing complex"/>
    <property type="evidence" value="ECO:0000266"/>
    <property type="project" value="RGD"/>
</dbReference>
<dbReference type="GO" id="GO:0030017">
    <property type="term" value="C:sarcomere"/>
    <property type="evidence" value="ECO:0000266"/>
    <property type="project" value="RGD"/>
</dbReference>
<dbReference type="GO" id="GO:0005802">
    <property type="term" value="C:trans-Golgi network"/>
    <property type="evidence" value="ECO:0000314"/>
    <property type="project" value="RGD"/>
</dbReference>
<dbReference type="GO" id="GO:0019003">
    <property type="term" value="F:GDP binding"/>
    <property type="evidence" value="ECO:0000314"/>
    <property type="project" value="RGD"/>
</dbReference>
<dbReference type="GO" id="GO:0005525">
    <property type="term" value="F:GTP binding"/>
    <property type="evidence" value="ECO:0000314"/>
    <property type="project" value="RGD"/>
</dbReference>
<dbReference type="GO" id="GO:0003924">
    <property type="term" value="F:GTPase activity"/>
    <property type="evidence" value="ECO:0007669"/>
    <property type="project" value="InterPro"/>
</dbReference>
<dbReference type="GO" id="GO:0000287">
    <property type="term" value="F:magnesium ion binding"/>
    <property type="evidence" value="ECO:0000314"/>
    <property type="project" value="RGD"/>
</dbReference>
<dbReference type="GO" id="GO:1990583">
    <property type="term" value="F:phospholipase D activator activity"/>
    <property type="evidence" value="ECO:0000314"/>
    <property type="project" value="RGD"/>
</dbReference>
<dbReference type="GO" id="GO:0019904">
    <property type="term" value="F:protein domain specific binding"/>
    <property type="evidence" value="ECO:0000266"/>
    <property type="project" value="RGD"/>
</dbReference>
<dbReference type="GO" id="GO:0007015">
    <property type="term" value="P:actin filament organization"/>
    <property type="evidence" value="ECO:0000315"/>
    <property type="project" value="RGD"/>
</dbReference>
<dbReference type="GO" id="GO:0097061">
    <property type="term" value="P:dendritic spine organization"/>
    <property type="evidence" value="ECO:0000315"/>
    <property type="project" value="UniProtKB"/>
</dbReference>
<dbReference type="GO" id="GO:0055108">
    <property type="term" value="P:Golgi to transport vesicle transport"/>
    <property type="evidence" value="ECO:0000314"/>
    <property type="project" value="RGD"/>
</dbReference>
<dbReference type="GO" id="GO:0006878">
    <property type="term" value="P:intracellular copper ion homeostasis"/>
    <property type="evidence" value="ECO:0000266"/>
    <property type="project" value="RGD"/>
</dbReference>
<dbReference type="GO" id="GO:0006886">
    <property type="term" value="P:intracellular protein transport"/>
    <property type="evidence" value="ECO:0000318"/>
    <property type="project" value="GO_Central"/>
</dbReference>
<dbReference type="GO" id="GO:0060292">
    <property type="term" value="P:long-term synaptic depression"/>
    <property type="evidence" value="ECO:0000314"/>
    <property type="project" value="UniProtKB"/>
</dbReference>
<dbReference type="GO" id="GO:0097212">
    <property type="term" value="P:lysosomal membrane organization"/>
    <property type="evidence" value="ECO:0000314"/>
    <property type="project" value="RGD"/>
</dbReference>
<dbReference type="GO" id="GO:1990386">
    <property type="term" value="P:mitotic cleavage furrow ingression"/>
    <property type="evidence" value="ECO:0000266"/>
    <property type="project" value="RGD"/>
</dbReference>
<dbReference type="GO" id="GO:0045956">
    <property type="term" value="P:positive regulation of calcium ion-dependent exocytosis"/>
    <property type="evidence" value="ECO:0000314"/>
    <property type="project" value="RGD"/>
</dbReference>
<dbReference type="GO" id="GO:0060999">
    <property type="term" value="P:positive regulation of dendritic spine development"/>
    <property type="evidence" value="ECO:0000315"/>
    <property type="project" value="RGD"/>
</dbReference>
<dbReference type="GO" id="GO:0045807">
    <property type="term" value="P:positive regulation of endocytosis"/>
    <property type="evidence" value="ECO:0000315"/>
    <property type="project" value="RGD"/>
</dbReference>
<dbReference type="GO" id="GO:1902953">
    <property type="term" value="P:positive regulation of ER to Golgi vesicle-mediated transport"/>
    <property type="evidence" value="ECO:0000315"/>
    <property type="project" value="RGD"/>
</dbReference>
<dbReference type="GO" id="GO:1902824">
    <property type="term" value="P:positive regulation of late endosome to lysosome transport"/>
    <property type="evidence" value="ECO:0000315"/>
    <property type="project" value="RGD"/>
</dbReference>
<dbReference type="GO" id="GO:0050714">
    <property type="term" value="P:positive regulation of protein secretion"/>
    <property type="evidence" value="ECO:0000315"/>
    <property type="project" value="RGD"/>
</dbReference>
<dbReference type="GO" id="GO:1902307">
    <property type="term" value="P:positive regulation of sodium ion transmembrane transport"/>
    <property type="evidence" value="ECO:0000315"/>
    <property type="project" value="RGD"/>
</dbReference>
<dbReference type="GO" id="GO:0098974">
    <property type="term" value="P:postsynaptic actin cytoskeleton organization"/>
    <property type="evidence" value="ECO:0000314"/>
    <property type="project" value="SynGO"/>
</dbReference>
<dbReference type="GO" id="GO:0034315">
    <property type="term" value="P:regulation of Arp2/3 complex-mediated actin nucleation"/>
    <property type="evidence" value="ECO:0000314"/>
    <property type="project" value="UniProtKB"/>
</dbReference>
<dbReference type="GO" id="GO:1903725">
    <property type="term" value="P:regulation of phospholipid metabolic process"/>
    <property type="evidence" value="ECO:0000314"/>
    <property type="project" value="RGD"/>
</dbReference>
<dbReference type="GO" id="GO:0002090">
    <property type="term" value="P:regulation of receptor internalization"/>
    <property type="evidence" value="ECO:0000314"/>
    <property type="project" value="UniProtKB"/>
</dbReference>
<dbReference type="GO" id="GO:0070142">
    <property type="term" value="P:synaptic vesicle budding"/>
    <property type="evidence" value="ECO:0000315"/>
    <property type="project" value="RGD"/>
</dbReference>
<dbReference type="GO" id="GO:0034379">
    <property type="term" value="P:very-low-density lipoprotein particle assembly"/>
    <property type="evidence" value="ECO:0000315"/>
    <property type="project" value="RGD"/>
</dbReference>
<dbReference type="GO" id="GO:0016192">
    <property type="term" value="P:vesicle-mediated transport"/>
    <property type="evidence" value="ECO:0000266"/>
    <property type="project" value="RGD"/>
</dbReference>
<dbReference type="CDD" id="cd04150">
    <property type="entry name" value="Arf1_5_like"/>
    <property type="match status" value="1"/>
</dbReference>
<dbReference type="FunFam" id="3.40.50.300:FF:003500">
    <property type="entry name" value="ADP-ribosylation factor 1"/>
    <property type="match status" value="1"/>
</dbReference>
<dbReference type="Gene3D" id="3.40.50.300">
    <property type="entry name" value="P-loop containing nucleotide triphosphate hydrolases"/>
    <property type="match status" value="1"/>
</dbReference>
<dbReference type="InterPro" id="IPR045872">
    <property type="entry name" value="Arf1-5-like"/>
</dbReference>
<dbReference type="InterPro" id="IPR027417">
    <property type="entry name" value="P-loop_NTPase"/>
</dbReference>
<dbReference type="InterPro" id="IPR005225">
    <property type="entry name" value="Small_GTP-bd"/>
</dbReference>
<dbReference type="InterPro" id="IPR024156">
    <property type="entry name" value="Small_GTPase_ARF"/>
</dbReference>
<dbReference type="InterPro" id="IPR006689">
    <property type="entry name" value="Small_GTPase_ARF/SAR"/>
</dbReference>
<dbReference type="NCBIfam" id="TIGR00231">
    <property type="entry name" value="small_GTP"/>
    <property type="match status" value="1"/>
</dbReference>
<dbReference type="PANTHER" id="PTHR11711">
    <property type="entry name" value="ADP RIBOSYLATION FACTOR-RELATED"/>
    <property type="match status" value="1"/>
</dbReference>
<dbReference type="Pfam" id="PF00025">
    <property type="entry name" value="Arf"/>
    <property type="match status" value="1"/>
</dbReference>
<dbReference type="PRINTS" id="PR00328">
    <property type="entry name" value="SAR1GTPBP"/>
</dbReference>
<dbReference type="SMART" id="SM00177">
    <property type="entry name" value="ARF"/>
    <property type="match status" value="1"/>
</dbReference>
<dbReference type="SMART" id="SM00175">
    <property type="entry name" value="RAB"/>
    <property type="match status" value="1"/>
</dbReference>
<dbReference type="SMART" id="SM00178">
    <property type="entry name" value="SAR"/>
    <property type="match status" value="1"/>
</dbReference>
<dbReference type="SUPFAM" id="SSF52540">
    <property type="entry name" value="P-loop containing nucleoside triphosphate hydrolases"/>
    <property type="match status" value="1"/>
</dbReference>
<dbReference type="PROSITE" id="PS51417">
    <property type="entry name" value="ARF"/>
    <property type="match status" value="1"/>
</dbReference>